<proteinExistence type="inferred from homology"/>
<accession>Q3A6Q2</accession>
<keyword id="KW-0488">Methylation</keyword>
<keyword id="KW-1185">Reference proteome</keyword>
<keyword id="KW-0687">Ribonucleoprotein</keyword>
<keyword id="KW-0689">Ribosomal protein</keyword>
<keyword id="KW-0694">RNA-binding</keyword>
<keyword id="KW-0699">rRNA-binding</keyword>
<keyword id="KW-0820">tRNA-binding</keyword>
<comment type="function">
    <text evidence="2">With S4 and S5 plays an important role in translational accuracy.</text>
</comment>
<comment type="function">
    <text evidence="2">Interacts with and stabilizes bases of the 16S rRNA that are involved in tRNA selection in the A site and with the mRNA backbone. Located at the interface of the 30S and 50S subunits, it traverses the body of the 30S subunit contacting proteins on the other side and probably holding the rRNA structure together. The combined cluster of proteins S8, S12 and S17 appears to hold together the shoulder and platform of the 30S subunit.</text>
</comment>
<comment type="subunit">
    <text evidence="2">Part of the 30S ribosomal subunit. Contacts proteins S8 and S17. May interact with IF1 in the 30S initiation complex.</text>
</comment>
<comment type="similarity">
    <text evidence="2">Belongs to the universal ribosomal protein uS12 family.</text>
</comment>
<organism>
    <name type="scientific">Syntrophotalea carbinolica (strain DSM 2380 / NBRC 103641 / GraBd1)</name>
    <name type="common">Pelobacter carbinolicus</name>
    <dbReference type="NCBI Taxonomy" id="338963"/>
    <lineage>
        <taxon>Bacteria</taxon>
        <taxon>Pseudomonadati</taxon>
        <taxon>Thermodesulfobacteriota</taxon>
        <taxon>Desulfuromonadia</taxon>
        <taxon>Desulfuromonadales</taxon>
        <taxon>Syntrophotaleaceae</taxon>
        <taxon>Syntrophotalea</taxon>
    </lineage>
</organism>
<gene>
    <name evidence="2" type="primary">rpsL</name>
    <name type="ordered locus">Pcar_0696</name>
</gene>
<feature type="chain" id="PRO_0000226401" description="Small ribosomal subunit protein uS12">
    <location>
        <begin position="1"/>
        <end position="123"/>
    </location>
</feature>
<feature type="modified residue" description="3-methylthioaspartic acid" evidence="1">
    <location>
        <position position="89"/>
    </location>
</feature>
<dbReference type="EMBL" id="CP000142">
    <property type="protein sequence ID" value="ABA87955.1"/>
    <property type="molecule type" value="Genomic_DNA"/>
</dbReference>
<dbReference type="RefSeq" id="WP_011340398.1">
    <property type="nucleotide sequence ID" value="NC_007498.2"/>
</dbReference>
<dbReference type="SMR" id="Q3A6Q2"/>
<dbReference type="STRING" id="338963.Pcar_0696"/>
<dbReference type="KEGG" id="pca:Pcar_0696"/>
<dbReference type="eggNOG" id="COG0048">
    <property type="taxonomic scope" value="Bacteria"/>
</dbReference>
<dbReference type="HOGENOM" id="CLU_104295_1_2_7"/>
<dbReference type="OrthoDB" id="9802366at2"/>
<dbReference type="Proteomes" id="UP000002534">
    <property type="component" value="Chromosome"/>
</dbReference>
<dbReference type="GO" id="GO:0015935">
    <property type="term" value="C:small ribosomal subunit"/>
    <property type="evidence" value="ECO:0007669"/>
    <property type="project" value="InterPro"/>
</dbReference>
<dbReference type="GO" id="GO:0019843">
    <property type="term" value="F:rRNA binding"/>
    <property type="evidence" value="ECO:0007669"/>
    <property type="project" value="UniProtKB-UniRule"/>
</dbReference>
<dbReference type="GO" id="GO:0003735">
    <property type="term" value="F:structural constituent of ribosome"/>
    <property type="evidence" value="ECO:0007669"/>
    <property type="project" value="InterPro"/>
</dbReference>
<dbReference type="GO" id="GO:0000049">
    <property type="term" value="F:tRNA binding"/>
    <property type="evidence" value="ECO:0007669"/>
    <property type="project" value="UniProtKB-UniRule"/>
</dbReference>
<dbReference type="GO" id="GO:0006412">
    <property type="term" value="P:translation"/>
    <property type="evidence" value="ECO:0007669"/>
    <property type="project" value="UniProtKB-UniRule"/>
</dbReference>
<dbReference type="CDD" id="cd03368">
    <property type="entry name" value="Ribosomal_S12"/>
    <property type="match status" value="1"/>
</dbReference>
<dbReference type="FunFam" id="2.40.50.140:FF:000001">
    <property type="entry name" value="30S ribosomal protein S12"/>
    <property type="match status" value="1"/>
</dbReference>
<dbReference type="Gene3D" id="2.40.50.140">
    <property type="entry name" value="Nucleic acid-binding proteins"/>
    <property type="match status" value="1"/>
</dbReference>
<dbReference type="HAMAP" id="MF_00403_B">
    <property type="entry name" value="Ribosomal_uS12_B"/>
    <property type="match status" value="1"/>
</dbReference>
<dbReference type="InterPro" id="IPR012340">
    <property type="entry name" value="NA-bd_OB-fold"/>
</dbReference>
<dbReference type="InterPro" id="IPR006032">
    <property type="entry name" value="Ribosomal_uS12"/>
</dbReference>
<dbReference type="InterPro" id="IPR005679">
    <property type="entry name" value="Ribosomal_uS12_bac"/>
</dbReference>
<dbReference type="NCBIfam" id="TIGR00981">
    <property type="entry name" value="rpsL_bact"/>
    <property type="match status" value="1"/>
</dbReference>
<dbReference type="PANTHER" id="PTHR11652">
    <property type="entry name" value="30S RIBOSOMAL PROTEIN S12 FAMILY MEMBER"/>
    <property type="match status" value="1"/>
</dbReference>
<dbReference type="Pfam" id="PF00164">
    <property type="entry name" value="Ribosom_S12_S23"/>
    <property type="match status" value="1"/>
</dbReference>
<dbReference type="PIRSF" id="PIRSF002133">
    <property type="entry name" value="Ribosomal_S12/S23"/>
    <property type="match status" value="1"/>
</dbReference>
<dbReference type="PRINTS" id="PR01034">
    <property type="entry name" value="RIBOSOMALS12"/>
</dbReference>
<dbReference type="SUPFAM" id="SSF50249">
    <property type="entry name" value="Nucleic acid-binding proteins"/>
    <property type="match status" value="1"/>
</dbReference>
<dbReference type="PROSITE" id="PS00055">
    <property type="entry name" value="RIBOSOMAL_S12"/>
    <property type="match status" value="1"/>
</dbReference>
<name>RS12_SYNC1</name>
<evidence type="ECO:0000250" key="1"/>
<evidence type="ECO:0000255" key="2">
    <source>
        <dbReference type="HAMAP-Rule" id="MF_00403"/>
    </source>
</evidence>
<evidence type="ECO:0000305" key="3"/>
<reference key="1">
    <citation type="submission" date="2005-10" db="EMBL/GenBank/DDBJ databases">
        <title>Complete sequence of Pelobacter carbinolicus DSM 2380.</title>
        <authorList>
            <person name="Copeland A."/>
            <person name="Lucas S."/>
            <person name="Lapidus A."/>
            <person name="Barry K."/>
            <person name="Detter J.C."/>
            <person name="Glavina T."/>
            <person name="Hammon N."/>
            <person name="Israni S."/>
            <person name="Pitluck S."/>
            <person name="Chertkov O."/>
            <person name="Schmutz J."/>
            <person name="Larimer F."/>
            <person name="Land M."/>
            <person name="Kyrpides N."/>
            <person name="Ivanova N."/>
            <person name="Richardson P."/>
        </authorList>
    </citation>
    <scope>NUCLEOTIDE SEQUENCE [LARGE SCALE GENOMIC DNA]</scope>
    <source>
        <strain>DSM 2380 / NBRC 103641 / GraBd1</strain>
    </source>
</reference>
<sequence>MPTINQLIRKGREKKVRKSTAPALKCNPQKRGVCTRVYTTTPKKPNSALRKVARVRLTNGIVVTSYIPGVGHNLQEHSVVLIRGGRVKDLPGVRYHIVRGALDLAGVKDRKQGRSKYGAKRPK</sequence>
<protein>
    <recommendedName>
        <fullName evidence="2">Small ribosomal subunit protein uS12</fullName>
    </recommendedName>
    <alternativeName>
        <fullName evidence="3">30S ribosomal protein S12</fullName>
    </alternativeName>
</protein>